<feature type="chain" id="PRO_0000358073" description="NADH-quinone oxidoreductase subunit C">
    <location>
        <begin position="1"/>
        <end position="200"/>
    </location>
</feature>
<name>NUOC_BURP1</name>
<keyword id="KW-0997">Cell inner membrane</keyword>
<keyword id="KW-1003">Cell membrane</keyword>
<keyword id="KW-0472">Membrane</keyword>
<keyword id="KW-0520">NAD</keyword>
<keyword id="KW-0874">Quinone</keyword>
<keyword id="KW-1278">Translocase</keyword>
<keyword id="KW-0813">Transport</keyword>
<keyword id="KW-0830">Ubiquinone</keyword>
<dbReference type="EC" id="7.1.1.-" evidence="1"/>
<dbReference type="EMBL" id="CP000124">
    <property type="protein sequence ID" value="ABA48589.1"/>
    <property type="molecule type" value="Genomic_DNA"/>
</dbReference>
<dbReference type="RefSeq" id="WP_004186121.1">
    <property type="nucleotide sequence ID" value="NC_007434.1"/>
</dbReference>
<dbReference type="SMR" id="Q3JUA7"/>
<dbReference type="EnsemblBacteria" id="ABA48589">
    <property type="protein sequence ID" value="ABA48589"/>
    <property type="gene ID" value="BURPS1710b_1437"/>
</dbReference>
<dbReference type="KEGG" id="bpm:BURPS1710b_1437"/>
<dbReference type="HOGENOM" id="CLU_042628_2_1_4"/>
<dbReference type="Proteomes" id="UP000002700">
    <property type="component" value="Chromosome I"/>
</dbReference>
<dbReference type="GO" id="GO:0005886">
    <property type="term" value="C:plasma membrane"/>
    <property type="evidence" value="ECO:0007669"/>
    <property type="project" value="UniProtKB-SubCell"/>
</dbReference>
<dbReference type="GO" id="GO:0008137">
    <property type="term" value="F:NADH dehydrogenase (ubiquinone) activity"/>
    <property type="evidence" value="ECO:0007669"/>
    <property type="project" value="InterPro"/>
</dbReference>
<dbReference type="GO" id="GO:0050136">
    <property type="term" value="F:NADH:ubiquinone reductase (non-electrogenic) activity"/>
    <property type="evidence" value="ECO:0007669"/>
    <property type="project" value="UniProtKB-UniRule"/>
</dbReference>
<dbReference type="GO" id="GO:0048038">
    <property type="term" value="F:quinone binding"/>
    <property type="evidence" value="ECO:0007669"/>
    <property type="project" value="UniProtKB-KW"/>
</dbReference>
<dbReference type="Gene3D" id="3.30.460.80">
    <property type="entry name" value="NADH:ubiquinone oxidoreductase, 30kDa subunit"/>
    <property type="match status" value="1"/>
</dbReference>
<dbReference type="HAMAP" id="MF_01357">
    <property type="entry name" value="NDH1_NuoC"/>
    <property type="match status" value="1"/>
</dbReference>
<dbReference type="InterPro" id="IPR010218">
    <property type="entry name" value="NADH_DH_suC"/>
</dbReference>
<dbReference type="InterPro" id="IPR037232">
    <property type="entry name" value="NADH_quin_OxRdtase_su_C/D-like"/>
</dbReference>
<dbReference type="InterPro" id="IPR001268">
    <property type="entry name" value="NADH_UbQ_OxRdtase_30kDa_su"/>
</dbReference>
<dbReference type="InterPro" id="IPR020396">
    <property type="entry name" value="NADH_UbQ_OxRdtase_CS"/>
</dbReference>
<dbReference type="NCBIfam" id="TIGR01961">
    <property type="entry name" value="NuoC_fam"/>
    <property type="match status" value="1"/>
</dbReference>
<dbReference type="NCBIfam" id="NF004730">
    <property type="entry name" value="PRK06074.1-1"/>
    <property type="match status" value="1"/>
</dbReference>
<dbReference type="PANTHER" id="PTHR10884:SF14">
    <property type="entry name" value="NADH DEHYDROGENASE [UBIQUINONE] IRON-SULFUR PROTEIN 3, MITOCHONDRIAL"/>
    <property type="match status" value="1"/>
</dbReference>
<dbReference type="PANTHER" id="PTHR10884">
    <property type="entry name" value="NADH DEHYDROGENASE UBIQUINONE IRON-SULFUR PROTEIN 3"/>
    <property type="match status" value="1"/>
</dbReference>
<dbReference type="Pfam" id="PF00329">
    <property type="entry name" value="Complex1_30kDa"/>
    <property type="match status" value="1"/>
</dbReference>
<dbReference type="SUPFAM" id="SSF143243">
    <property type="entry name" value="Nqo5-like"/>
    <property type="match status" value="1"/>
</dbReference>
<dbReference type="PROSITE" id="PS00542">
    <property type="entry name" value="COMPLEX1_30K"/>
    <property type="match status" value="1"/>
</dbReference>
<protein>
    <recommendedName>
        <fullName evidence="1">NADH-quinone oxidoreductase subunit C</fullName>
        <ecNumber evidence="1">7.1.1.-</ecNumber>
    </recommendedName>
    <alternativeName>
        <fullName evidence="1">NADH dehydrogenase I subunit C</fullName>
    </alternativeName>
    <alternativeName>
        <fullName evidence="1">NDH-1 subunit C</fullName>
    </alternativeName>
</protein>
<reference key="1">
    <citation type="journal article" date="2010" name="Genome Biol. Evol.">
        <title>Continuing evolution of Burkholderia mallei through genome reduction and large-scale rearrangements.</title>
        <authorList>
            <person name="Losada L."/>
            <person name="Ronning C.M."/>
            <person name="DeShazer D."/>
            <person name="Woods D."/>
            <person name="Fedorova N."/>
            <person name="Kim H.S."/>
            <person name="Shabalina S.A."/>
            <person name="Pearson T.R."/>
            <person name="Brinkac L."/>
            <person name="Tan P."/>
            <person name="Nandi T."/>
            <person name="Crabtree J."/>
            <person name="Badger J."/>
            <person name="Beckstrom-Sternberg S."/>
            <person name="Saqib M."/>
            <person name="Schutzer S.E."/>
            <person name="Keim P."/>
            <person name="Nierman W.C."/>
        </authorList>
    </citation>
    <scope>NUCLEOTIDE SEQUENCE [LARGE SCALE GENOMIC DNA]</scope>
    <source>
        <strain>1710b</strain>
    </source>
</reference>
<evidence type="ECO:0000255" key="1">
    <source>
        <dbReference type="HAMAP-Rule" id="MF_01357"/>
    </source>
</evidence>
<organism>
    <name type="scientific">Burkholderia pseudomallei (strain 1710b)</name>
    <dbReference type="NCBI Taxonomy" id="320372"/>
    <lineage>
        <taxon>Bacteria</taxon>
        <taxon>Pseudomonadati</taxon>
        <taxon>Pseudomonadota</taxon>
        <taxon>Betaproteobacteria</taxon>
        <taxon>Burkholderiales</taxon>
        <taxon>Burkholderiaceae</taxon>
        <taxon>Burkholderia</taxon>
        <taxon>pseudomallei group</taxon>
    </lineage>
</organism>
<comment type="function">
    <text evidence="1">NDH-1 shuttles electrons from NADH, via FMN and iron-sulfur (Fe-S) centers, to quinones in the respiratory chain. The immediate electron acceptor for the enzyme in this species is believed to be ubiquinone. Couples the redox reaction to proton translocation (for every two electrons transferred, four hydrogen ions are translocated across the cytoplasmic membrane), and thus conserves the redox energy in a proton gradient.</text>
</comment>
<comment type="catalytic activity">
    <reaction evidence="1">
        <text>a quinone + NADH + 5 H(+)(in) = a quinol + NAD(+) + 4 H(+)(out)</text>
        <dbReference type="Rhea" id="RHEA:57888"/>
        <dbReference type="ChEBI" id="CHEBI:15378"/>
        <dbReference type="ChEBI" id="CHEBI:24646"/>
        <dbReference type="ChEBI" id="CHEBI:57540"/>
        <dbReference type="ChEBI" id="CHEBI:57945"/>
        <dbReference type="ChEBI" id="CHEBI:132124"/>
    </reaction>
</comment>
<comment type="subunit">
    <text evidence="1">NDH-1 is composed of 14 different subunits. Subunits NuoB, C, D, E, F, and G constitute the peripheral sector of the complex.</text>
</comment>
<comment type="subcellular location">
    <subcellularLocation>
        <location evidence="1">Cell inner membrane</location>
        <topology evidence="1">Peripheral membrane protein</topology>
        <orientation evidence="1">Cytoplasmic side</orientation>
    </subcellularLocation>
</comment>
<comment type="similarity">
    <text evidence="1">Belongs to the complex I 30 kDa subunit family.</text>
</comment>
<accession>Q3JUA7</accession>
<proteinExistence type="inferred from homology"/>
<sequence length="200" mass="22765">MASKIETLKANLEAALGARAVSLVEAVGELTLVVKASDYLEVAKQLRDDRSLGFEQLIDLCGVDYQTYGDGAYDGPRFAAVLHLLSVANNWRLRVRVFASDDDLPIVPSVVDIWNSANWYEREAFDLYGIVFEGHPDLRRILTDYGFIGHPFRKDFPVSGYVEMRYDPQEKRVVYQPVTIEPREITPRVIREDRYGGLKH</sequence>
<gene>
    <name evidence="1" type="primary">nuoC</name>
    <name type="ordered locus">BURPS1710b_1437</name>
</gene>